<proteinExistence type="predicted"/>
<feature type="chain" id="PRO_0000050039" description="Uncharacterized protein YxkA">
    <location>
        <begin position="1"/>
        <end position="168"/>
    </location>
</feature>
<dbReference type="EMBL" id="X99339">
    <property type="status" value="NOT_ANNOTATED_CDS"/>
    <property type="molecule type" value="Genomic_DNA"/>
</dbReference>
<dbReference type="EMBL" id="D83026">
    <property type="protein sequence ID" value="BAA11717.1"/>
    <property type="molecule type" value="Genomic_DNA"/>
</dbReference>
<dbReference type="EMBL" id="AL009126">
    <property type="protein sequence ID" value="CAB15913.1"/>
    <property type="molecule type" value="Genomic_DNA"/>
</dbReference>
<dbReference type="PIR" id="E70080">
    <property type="entry name" value="E70080"/>
</dbReference>
<dbReference type="RefSeq" id="NP_391766.1">
    <property type="nucleotide sequence ID" value="NC_000964.3"/>
</dbReference>
<dbReference type="RefSeq" id="WP_009968379.1">
    <property type="nucleotide sequence ID" value="NZ_OZ025638.1"/>
</dbReference>
<dbReference type="SMR" id="P55185"/>
<dbReference type="FunCoup" id="P55185">
    <property type="interactions" value="100"/>
</dbReference>
<dbReference type="STRING" id="224308.BSU38870"/>
<dbReference type="PaxDb" id="224308-BSU38870"/>
<dbReference type="EnsemblBacteria" id="CAB15913">
    <property type="protein sequence ID" value="CAB15913"/>
    <property type="gene ID" value="BSU_38870"/>
</dbReference>
<dbReference type="GeneID" id="937438"/>
<dbReference type="KEGG" id="bsu:BSU38870"/>
<dbReference type="PATRIC" id="fig|224308.179.peg.4206"/>
<dbReference type="eggNOG" id="COG1881">
    <property type="taxonomic scope" value="Bacteria"/>
</dbReference>
<dbReference type="InParanoid" id="P55185"/>
<dbReference type="OrthoDB" id="9797506at2"/>
<dbReference type="PhylomeDB" id="P55185"/>
<dbReference type="BioCyc" id="BSUB:BSU38870-MONOMER"/>
<dbReference type="Proteomes" id="UP000001570">
    <property type="component" value="Chromosome"/>
</dbReference>
<dbReference type="CDD" id="cd00865">
    <property type="entry name" value="PEBP_bact_arch"/>
    <property type="match status" value="1"/>
</dbReference>
<dbReference type="Gene3D" id="3.90.280.10">
    <property type="entry name" value="PEBP-like"/>
    <property type="match status" value="1"/>
</dbReference>
<dbReference type="InterPro" id="IPR008914">
    <property type="entry name" value="PEBP"/>
</dbReference>
<dbReference type="InterPro" id="IPR036610">
    <property type="entry name" value="PEBP-like_sf"/>
</dbReference>
<dbReference type="InterPro" id="IPR005247">
    <property type="entry name" value="YbhB_YbcL/LppC-like"/>
</dbReference>
<dbReference type="NCBIfam" id="TIGR00481">
    <property type="entry name" value="YbhB/YbcL family Raf kinase inhibitor-like protein"/>
    <property type="match status" value="1"/>
</dbReference>
<dbReference type="PANTHER" id="PTHR30289:SF1">
    <property type="entry name" value="PEBP (PHOSPHATIDYLETHANOLAMINE-BINDING PROTEIN) FAMILY PROTEIN"/>
    <property type="match status" value="1"/>
</dbReference>
<dbReference type="PANTHER" id="PTHR30289">
    <property type="entry name" value="UNCHARACTERIZED PROTEIN YBCL-RELATED"/>
    <property type="match status" value="1"/>
</dbReference>
<dbReference type="Pfam" id="PF01161">
    <property type="entry name" value="PBP"/>
    <property type="match status" value="1"/>
</dbReference>
<dbReference type="SUPFAM" id="SSF49777">
    <property type="entry name" value="PEBP-like"/>
    <property type="match status" value="1"/>
</dbReference>
<reference key="1">
    <citation type="journal article" date="1996" name="FEMS Microbiol. Lett.">
        <title>Expression of a pepT homologue from Bacillus subtilis.</title>
        <authorList>
            <person name="Schroegel O."/>
            <person name="Krispin O."/>
            <person name="Allmansberger R."/>
        </authorList>
    </citation>
    <scope>NUCLEOTIDE SEQUENCE [GENOMIC DNA]</scope>
    <source>
        <strain>168</strain>
    </source>
</reference>
<reference key="2">
    <citation type="journal article" date="1996" name="Microbiology">
        <title>Sequencing of a 65 kb region of the Bacillus subtilis genome containing the lic and cel loci, and creation of a 177 kb contig covering the gnt-sacXY region.</title>
        <authorList>
            <person name="Yoshida K."/>
            <person name="Shindo K."/>
            <person name="Sano H."/>
            <person name="Seki S."/>
            <person name="Fujimura M."/>
            <person name="Yanai N."/>
            <person name="Miwa Y."/>
            <person name="Fujita Y."/>
        </authorList>
    </citation>
    <scope>NUCLEOTIDE SEQUENCE [GENOMIC DNA]</scope>
    <source>
        <strain>168 / BGSC1A1</strain>
    </source>
</reference>
<reference key="3">
    <citation type="journal article" date="1997" name="Nature">
        <title>The complete genome sequence of the Gram-positive bacterium Bacillus subtilis.</title>
        <authorList>
            <person name="Kunst F."/>
            <person name="Ogasawara N."/>
            <person name="Moszer I."/>
            <person name="Albertini A.M."/>
            <person name="Alloni G."/>
            <person name="Azevedo V."/>
            <person name="Bertero M.G."/>
            <person name="Bessieres P."/>
            <person name="Bolotin A."/>
            <person name="Borchert S."/>
            <person name="Borriss R."/>
            <person name="Boursier L."/>
            <person name="Brans A."/>
            <person name="Braun M."/>
            <person name="Brignell S.C."/>
            <person name="Bron S."/>
            <person name="Brouillet S."/>
            <person name="Bruschi C.V."/>
            <person name="Caldwell B."/>
            <person name="Capuano V."/>
            <person name="Carter N.M."/>
            <person name="Choi S.-K."/>
            <person name="Codani J.-J."/>
            <person name="Connerton I.F."/>
            <person name="Cummings N.J."/>
            <person name="Daniel R.A."/>
            <person name="Denizot F."/>
            <person name="Devine K.M."/>
            <person name="Duesterhoeft A."/>
            <person name="Ehrlich S.D."/>
            <person name="Emmerson P.T."/>
            <person name="Entian K.-D."/>
            <person name="Errington J."/>
            <person name="Fabret C."/>
            <person name="Ferrari E."/>
            <person name="Foulger D."/>
            <person name="Fritz C."/>
            <person name="Fujita M."/>
            <person name="Fujita Y."/>
            <person name="Fuma S."/>
            <person name="Galizzi A."/>
            <person name="Galleron N."/>
            <person name="Ghim S.-Y."/>
            <person name="Glaser P."/>
            <person name="Goffeau A."/>
            <person name="Golightly E.J."/>
            <person name="Grandi G."/>
            <person name="Guiseppi G."/>
            <person name="Guy B.J."/>
            <person name="Haga K."/>
            <person name="Haiech J."/>
            <person name="Harwood C.R."/>
            <person name="Henaut A."/>
            <person name="Hilbert H."/>
            <person name="Holsappel S."/>
            <person name="Hosono S."/>
            <person name="Hullo M.-F."/>
            <person name="Itaya M."/>
            <person name="Jones L.-M."/>
            <person name="Joris B."/>
            <person name="Karamata D."/>
            <person name="Kasahara Y."/>
            <person name="Klaerr-Blanchard M."/>
            <person name="Klein C."/>
            <person name="Kobayashi Y."/>
            <person name="Koetter P."/>
            <person name="Koningstein G."/>
            <person name="Krogh S."/>
            <person name="Kumano M."/>
            <person name="Kurita K."/>
            <person name="Lapidus A."/>
            <person name="Lardinois S."/>
            <person name="Lauber J."/>
            <person name="Lazarevic V."/>
            <person name="Lee S.-M."/>
            <person name="Levine A."/>
            <person name="Liu H."/>
            <person name="Masuda S."/>
            <person name="Mauel C."/>
            <person name="Medigue C."/>
            <person name="Medina N."/>
            <person name="Mellado R.P."/>
            <person name="Mizuno M."/>
            <person name="Moestl D."/>
            <person name="Nakai S."/>
            <person name="Noback M."/>
            <person name="Noone D."/>
            <person name="O'Reilly M."/>
            <person name="Ogawa K."/>
            <person name="Ogiwara A."/>
            <person name="Oudega B."/>
            <person name="Park S.-H."/>
            <person name="Parro V."/>
            <person name="Pohl T.M."/>
            <person name="Portetelle D."/>
            <person name="Porwollik S."/>
            <person name="Prescott A.M."/>
            <person name="Presecan E."/>
            <person name="Pujic P."/>
            <person name="Purnelle B."/>
            <person name="Rapoport G."/>
            <person name="Rey M."/>
            <person name="Reynolds S."/>
            <person name="Rieger M."/>
            <person name="Rivolta C."/>
            <person name="Rocha E."/>
            <person name="Roche B."/>
            <person name="Rose M."/>
            <person name="Sadaie Y."/>
            <person name="Sato T."/>
            <person name="Scanlan E."/>
            <person name="Schleich S."/>
            <person name="Schroeter R."/>
            <person name="Scoffone F."/>
            <person name="Sekiguchi J."/>
            <person name="Sekowska A."/>
            <person name="Seror S.J."/>
            <person name="Serror P."/>
            <person name="Shin B.-S."/>
            <person name="Soldo B."/>
            <person name="Sorokin A."/>
            <person name="Tacconi E."/>
            <person name="Takagi T."/>
            <person name="Takahashi H."/>
            <person name="Takemaru K."/>
            <person name="Takeuchi M."/>
            <person name="Tamakoshi A."/>
            <person name="Tanaka T."/>
            <person name="Terpstra P."/>
            <person name="Tognoni A."/>
            <person name="Tosato V."/>
            <person name="Uchiyama S."/>
            <person name="Vandenbol M."/>
            <person name="Vannier F."/>
            <person name="Vassarotti A."/>
            <person name="Viari A."/>
            <person name="Wambutt R."/>
            <person name="Wedler E."/>
            <person name="Wedler H."/>
            <person name="Weitzenegger T."/>
            <person name="Winters P."/>
            <person name="Wipat A."/>
            <person name="Yamamoto H."/>
            <person name="Yamane K."/>
            <person name="Yasumoto K."/>
            <person name="Yata K."/>
            <person name="Yoshida K."/>
            <person name="Yoshikawa H.-F."/>
            <person name="Zumstein E."/>
            <person name="Yoshikawa H."/>
            <person name="Danchin A."/>
        </authorList>
    </citation>
    <scope>NUCLEOTIDE SEQUENCE [LARGE SCALE GENOMIC DNA]</scope>
    <source>
        <strain>168</strain>
    </source>
</reference>
<keyword id="KW-1185">Reference proteome</keyword>
<comment type="sequence caution" evidence="1">
    <conflict type="frameshift">
        <sequence resource="EMBL" id="X99339"/>
    </conflict>
</comment>
<accession>P55185</accession>
<accession>P94355</accession>
<gene>
    <name type="primary">yxkA</name>
    <name type="ordered locus">BSU38870</name>
</gene>
<sequence length="168" mass="19030">MNIYVEANPYLHDKYSKYADEKYKREGNPFVSFPIHFDDIPSGAKTLALTFIDHDAIPVCGFSWIHWTAANIPAYIGELPEHASEERQDLMIQGQNSFASPLAGSNDPKVIHQYCGPTPPDKDHAYTLTVYALDAELNLQPGFYLNELYQEMKEHILAETSIELLARV</sequence>
<protein>
    <recommendedName>
        <fullName>Uncharacterized protein YxkA</fullName>
    </recommendedName>
</protein>
<name>YXKA_BACSU</name>
<evidence type="ECO:0000305" key="1"/>
<organism>
    <name type="scientific">Bacillus subtilis (strain 168)</name>
    <dbReference type="NCBI Taxonomy" id="224308"/>
    <lineage>
        <taxon>Bacteria</taxon>
        <taxon>Bacillati</taxon>
        <taxon>Bacillota</taxon>
        <taxon>Bacilli</taxon>
        <taxon>Bacillales</taxon>
        <taxon>Bacillaceae</taxon>
        <taxon>Bacillus</taxon>
    </lineage>
</organism>